<comment type="function">
    <text evidence="1">Factor of infectivity and pathogenicity, required for optimal virus replication. Alters numerous pathways of T-lymphocyte function and down-regulates immunity surface molecules in order to evade host defense and increase viral infectivity. Alters the functionality of other immunity cells, like dendritic cells, monocytes/macrophages and NK cells.</text>
</comment>
<comment type="function">
    <text evidence="1">In infected CD4(+) T-lymphocytes, down-regulates the surface MHC-I, mature MHC-II, CD4, CD28, CCR5 and CXCR4 molecules. Mediates internalization and degradation of host CD4 through the interaction of with the cytoplasmic tail of CD4, the recruitment of AP-2 (clathrin adapter protein complex 2), internalization through clathrin coated pits, and subsequent transport to endosomes and lysosomes for degradation. Diverts host MHC-I molecules to the trans-Golgi network-associated endosomal compartments by an endocytic pathway to finally target them for degradation. MHC-I down-regulation may involve AP-1 (clathrin adapter protein complex 1) or possibly Src family kinase-ZAP70/Syk-PI3K cascade recruited by PACS2. In consequence infected cells are masked for immune recognition by cytotoxic T-lymphocytes. Decreasing the number of immune receptors also prevents reinfection by more HIV particles (superinfection). Down-regulates host SERINC3 and SERINC5 thereby excluding these proteins from the viral particles. Virion infectivity is drastically higher when SERINC3 or SERINC5 are excluded from the viral envelope, because these host antiviral proteins impair the membrane fusion event necessary for subsequent virion penetration.</text>
</comment>
<comment type="function">
    <text evidence="1">Bypasses host T-cell signaling by inducing a transcriptional program nearly identical to that of anti-CD3 cell activation. Interaction with TCR-zeta chain up-regulates the Fas ligand (FasL). Increasing surface FasL molecules and decreasing surface MHC-I molecules on infected CD4(+) cells send attacking cytotoxic CD8+ T-lymphocytes into apoptosis.</text>
</comment>
<comment type="function">
    <text evidence="1">Plays a role in optimizing the host cell environment for viral replication without causing cell death by apoptosis. Protects the infected cells from apoptosis in order to keep them alive until the next virus generation is ready to strike. Inhibits the Fas and TNFR-mediated death signals by blocking MAP3K5/ASK1. Decreases the half-life of TP53, protecting the infected cell against p53-mediated apoptosis. Inhibits the apoptotic signals regulated by the Bcl-2 family proteins through the formation of a Nef/PI3-kinase/PAK2 complex that leads to activation of PAK2 and induces phosphorylation of host BAD.</text>
</comment>
<comment type="function">
    <text evidence="1">Extracellular Nef protein targets CD4(+) T-lymphocytes for apoptosis by interacting with CXCR4 surface receptors.</text>
</comment>
<comment type="subunit">
    <text evidence="1">Monomer; cytosolic form. Homodimer; membrane bound form. Interacts with Nef associated p21-activated kinase (PAK2); this interaction activates PAK2. Associates with the Nef-MHC-I-AP1 complex; this complex is required for MHC-I internalization. Interacts (via C-terminus) with host PI3-kinase. Interacts with host PACS1; this interaction seems to be weak. Interacts with host PACS2. Interacts with host LCK and MAPK3; these interactions inhibit the kinase activity of the latter. Interacts with host ATP6V1H; this interaction may play a role in CD4 endocytosis. Associates with the CD4-Nef-AP2 complex; this complex is required for CD4 internalization. Interacts with host AP2 subunit alpha and AP2 subunit sigma2. Interacts with TCR-zeta chain; this interaction up-regulates the Fas ligand (FasL) surface expression. Interacts with host HCK, LYN, and SRC; these interactions activate the Src family kinases. Interacts with MAP3K5; this interaction inhibits the Fas and TNFR-mediated death signals. Interacts with beta-COP and PTE1. Interacts with human RACK1; this increases Nef phosphorylation by PKC. Interacts with TP53; this interaction decreases the half-life of TP53, protecting the infected cell against p53-mediated apoptosis.</text>
</comment>
<comment type="interaction">
    <interactant intactId="EBI-7355146">
        <id>Q9QPN3</id>
    </interactant>
    <interactant intactId="EBI-346547">
        <id>P50570</id>
        <label>DNM2</label>
    </interactant>
    <organismsDiffer>true</organismsDiffer>
    <experiments>4</experiments>
</comment>
<comment type="subcellular location">
    <subcellularLocation>
        <location evidence="1">Host cell membrane</location>
        <topology evidence="1">Lipid-anchor</topology>
        <orientation evidence="1">Cytoplasmic side</orientation>
    </subcellularLocation>
    <subcellularLocation>
        <location evidence="1">Virion</location>
    </subcellularLocation>
    <subcellularLocation>
        <location evidence="1">Secreted</location>
    </subcellularLocation>
    <subcellularLocation>
        <location evidence="1">Host Golgi apparatus membrane</location>
    </subcellularLocation>
    <text evidence="1">TGN localization requires PACS1. Associates with the inner plasma membrane through its N-terminal domain. Nef stimulates its own export via the release of exosomes. Incorporated in virions at a rate of about 10 molecules per virion, where it is cleaved.</text>
</comment>
<comment type="induction">
    <text evidence="1">Expressed early in the viral replication cycle.</text>
</comment>
<comment type="domain">
    <text evidence="1">The N-terminal domain is composed of the N-myristoyl glycine and of a cluster of positively charged amino acids. It is required for inner plasma membrane targeting of Nef and virion incorporation, and thereby for infectivity. This domain is also involved in binding to TP53.</text>
</comment>
<comment type="domain">
    <text evidence="1">The SH3-binding domain constituted of PxxP motifs mediates binding to several Src family proteins thereby regulating their tyrosine kinase activity. The same motifs also mediates the association with MAPK3, PI3-kinase and TCR-zeta.</text>
</comment>
<comment type="domain">
    <text evidence="1">The dileucine internalization motif and a diacidic motif seem to be required for binding to AP-2.</text>
</comment>
<comment type="domain">
    <text evidence="1">The acidic region binds to the sorting protein PACS-2, which targets Nef to the paranuclear region, enabling the PxxP motif to direct assembly of an SFK/ZAP-70/PI3K complex that accelerates endocytosis of cell-surface MHC-I.</text>
</comment>
<comment type="PTM">
    <text evidence="1">The virion-associated Nef proteins are cleaved by the viral protease to release the soluble C-terminal core protein. Nef is probably cleaved concomitantly with viral structural proteins on maturation of virus particles.</text>
</comment>
<comment type="PTM">
    <text evidence="1">Myristoylated.</text>
</comment>
<comment type="PTM">
    <text evidence="1">Phosphorylated on serine residues, probably by host PKCdelta and theta.</text>
</comment>
<comment type="miscellaneous">
    <text evidence="1">HIV-1 lineages are divided in three main groups, M (for Major), O (for Outlier), and N (for New, or Non-M, Non-O). The vast majority of strains found worldwide belong to the group M. Group O seems to be endemic to and largely confined to Cameroon and neighboring countries in West Central Africa, where these viruses represent a small minority of HIV-1 strains. The group N is represented by a limited number of isolates from Cameroonian persons. The group M is further subdivided in 9 clades or subtypes (A to D, F to H, J and K).</text>
</comment>
<comment type="similarity">
    <text evidence="1">Belongs to the lentivirus primate group Nef protein family.</text>
</comment>
<reference key="1">
    <citation type="submission" date="1999-07" db="EMBL/GenBank/DDBJ databases">
        <authorList>
            <person name="Piedade J."/>
            <person name="Esteves A."/>
            <person name="Parreira R."/>
            <person name="Venenno T."/>
            <person name="Barros M.F."/>
            <person name="Canas-Ferreira W.F."/>
        </authorList>
    </citation>
    <scope>NUCLEOTIDE SEQUENCE [GENOMIC DNA]</scope>
</reference>
<reference key="2">
    <citation type="journal article" date="1994" name="J. Biol. Chem.">
        <title>Physical interaction of the HIV-1 Nef protein with beta-COP, a component of non-clathrin-coated vesicles essential for membrane traffic.</title>
        <authorList>
            <person name="Benichou S."/>
            <person name="Bomsel M."/>
            <person name="Bodeus M."/>
            <person name="Durand H."/>
            <person name="Doute M."/>
            <person name="Letourneur F."/>
            <person name="Camonis J."/>
            <person name="Benarous R."/>
        </authorList>
    </citation>
    <scope>INTERACTION WITH HUMAN BETA-COP</scope>
</reference>
<reference key="3">
    <citation type="journal article" date="1997" name="J. Biol. Chem.">
        <title>Binding of HIV-1 Nef to a novel thioesterase enzyme correlates with Nef-mediated CD4 down-regulation.</title>
        <authorList>
            <person name="Liu L.X."/>
            <person name="Margottin F."/>
            <person name="Le Gall S."/>
            <person name="Schwartz O."/>
            <person name="Selig L."/>
            <person name="Benarous R."/>
            <person name="Benichou S."/>
        </authorList>
    </citation>
    <scope>INTERACTION WITH HUMAN PTE1</scope>
    <scope>MUTANT NEF*4</scope>
</reference>
<reference key="4">
    <citation type="journal article" date="2000" name="J. Virol.">
        <title>Mutation of a conserved residue (D123) required for oligomerization of human immunodeficiency virus type 1 Nef protein abolishes interaction with human thioesterase and results in impairment of Nef biological functions.</title>
        <authorList>
            <person name="Liu L.X."/>
            <person name="Heveker N."/>
            <person name="Fackler O.T."/>
            <person name="Arold S."/>
            <person name="Le Gall S."/>
            <person name="Janvier K."/>
            <person name="Peterlin B.M."/>
            <person name="Dumas C."/>
            <person name="Schwartz O."/>
            <person name="Benichou S."/>
            <person name="Benarous R."/>
        </authorList>
    </citation>
    <scope>FUNCTION</scope>
    <scope>HOMODIMERIZATION</scope>
    <scope>MUTAGENESIS OF TRP-57; ASP-108; ASP-111; LEU-112; PHE-121; PRO-122; ASP-123; TRP-124 AND ASN-126</scope>
</reference>
<reference key="5">
    <citation type="journal article" date="2001" name="J. Virol.">
        <title>Nef-induced CD4 down-regulation: a diacidic sequence in human immunodeficiency virus type 1 Nef does not function as a protein sorting motif through direct binding to beta-COP.</title>
        <authorList>
            <person name="Janvier K."/>
            <person name="Craig H."/>
            <person name="Le Gall S."/>
            <person name="Benarous R."/>
            <person name="Guatelli J."/>
            <person name="Schwartz O."/>
            <person name="Benichou S."/>
        </authorList>
    </citation>
    <scope>FUNCTION</scope>
    <scope>MUTAGENESIS OF 154-GLU-GLU-155; 164-LEU-LEU-165 AND 174-ASP-ASP-175</scope>
</reference>
<organism>
    <name type="scientific">Human immunodeficiency virus type 1 group M subtype B (isolate Lai)</name>
    <name type="common">HIV-1</name>
    <dbReference type="NCBI Taxonomy" id="290579"/>
    <lineage>
        <taxon>Viruses</taxon>
        <taxon>Riboviria</taxon>
        <taxon>Pararnavirae</taxon>
        <taxon>Artverviricota</taxon>
        <taxon>Revtraviricetes</taxon>
        <taxon>Ortervirales</taxon>
        <taxon>Retroviridae</taxon>
        <taxon>Orthoretrovirinae</taxon>
        <taxon>Lentivirus</taxon>
        <taxon>Human immunodeficiency virus type 1</taxon>
    </lineage>
</organism>
<evidence type="ECO:0000255" key="1">
    <source>
        <dbReference type="HAMAP-Rule" id="MF_04078"/>
    </source>
</evidence>
<evidence type="ECO:0000269" key="2">
    <source>
    </source>
</evidence>
<evidence type="ECO:0000269" key="3">
    <source>
    </source>
</evidence>
<accession>Q9QPN3</accession>
<name>NEF_HV1LA</name>
<sequence>MGGKWSKSSVVGWPAVRERMRRAEPAADGVGAVSRDLEKHGAITSSNTAATNADCAWLEAQEEEEVGFPVTPQVPLRPMTYKAAVDLSHFLKEKGGLEGLIHSQRRQDILDLWIYHTQGYFPDWQNYTPEPGVRYPLTFGWCYKLVPVEPDKVEEANKGENTRLLHPVSLHGMDDPEREVLEWRFDSRLAFHHVARELHPEY</sequence>
<proteinExistence type="evidence at protein level"/>
<feature type="initiator methionine" description="Removed; by host" evidence="1">
    <location>
        <position position="1"/>
    </location>
</feature>
<feature type="chain" id="PRO_0000038323" description="Protein Nef" evidence="1">
    <location>
        <begin position="2"/>
        <end position="202"/>
    </location>
</feature>
<feature type="chain" id="PRO_0000038324" description="C-terminal core protein" evidence="1">
    <location>
        <begin position="58"/>
        <end position="202"/>
    </location>
</feature>
<feature type="region of interest" description="Acidic; interacts with host PACS1 and PACS2; stabilizes the interaction of NEF/MHC-I with host AP1M1; necessary for MHC-I internalization" evidence="1">
    <location>
        <begin position="62"/>
        <end position="65"/>
    </location>
</feature>
<feature type="region of interest" description="SH3-binding; interaction with Src family tyrosine kinases" evidence="1">
    <location>
        <begin position="69"/>
        <end position="78"/>
    </location>
</feature>
<feature type="region of interest" description="Mediates dimerization, Nef-PTE1 interaction" evidence="1">
    <location>
        <begin position="108"/>
        <end position="124"/>
    </location>
</feature>
<feature type="region of interest" description="Binding to ATP6V1H" evidence="1">
    <location>
        <begin position="148"/>
        <end position="180"/>
    </location>
</feature>
<feature type="short sequence motif" description="PxxP; stabilizes the interaction of NEF/MHC-I with host AP1M1; necessary for MHC-I internalization" evidence="1">
    <location>
        <begin position="72"/>
        <end position="75"/>
    </location>
</feature>
<feature type="short sequence motif" description="Dileucine internalization motif; necessary for CD4 internalization" evidence="1">
    <location>
        <begin position="164"/>
        <end position="165"/>
    </location>
</feature>
<feature type="short sequence motif" description="Diacidic; necessary for CD4 internalization" evidence="1">
    <location>
        <begin position="174"/>
        <end position="175"/>
    </location>
</feature>
<feature type="site" description="Might play a role in AP-1 recruitment to the Nef-MHC-I complex" evidence="1">
    <location>
        <position position="20"/>
    </location>
</feature>
<feature type="site" description="Cleavage; by viral protease" evidence="1">
    <location>
        <begin position="57"/>
        <end position="58"/>
    </location>
</feature>
<feature type="modified residue" description="Phosphoserine; by host" evidence="1">
    <location>
        <position position="6"/>
    </location>
</feature>
<feature type="lipid moiety-binding region" description="N-myristoyl glycine; by host" evidence="1">
    <location>
        <position position="2"/>
    </location>
</feature>
<feature type="mutagenesis site" description="In Nef*4; complete loss of Nef-induced CD4 down-regulation." evidence="2">
    <original>W</original>
    <variation>R</variation>
    <location>
        <position position="57"/>
    </location>
</feature>
<feature type="mutagenesis site" description="In Nef*4.">
    <original>F</original>
    <variation>S</variation>
    <location>
        <position position="68"/>
    </location>
</feature>
<feature type="mutagenesis site" description="Complete loss of Nef-PTE1 interaction and Nef-induced CD4 down-modulation." evidence="2">
    <original>D</original>
    <variation>A</variation>
    <location>
        <position position="108"/>
    </location>
</feature>
<feature type="mutagenesis site" description="Complete loss of Nef-PTE1 interaction and Nef-induced CD4 down-modulation." evidence="2">
    <original>D</original>
    <variation>G</variation>
    <location>
        <position position="111"/>
    </location>
</feature>
<feature type="mutagenesis site" description="Complete loss of Nef-PTE1 interaction and Nef-induced CD4 down-modulation." evidence="2">
    <original>L</original>
    <variation>D</variation>
    <location>
        <position position="112"/>
    </location>
</feature>
<feature type="mutagenesis site" description="Complete loss of Nef-PTE1 interaction and Nef-induced CD4 down-modulation." evidence="2">
    <original>F</original>
    <variation>G</variation>
    <location>
        <position position="121"/>
    </location>
</feature>
<feature type="mutagenesis site" description="Complete loss of Nef-PTE1 interaction and Nef-induced CD4 down-modulation." evidence="2">
    <original>P</original>
    <variation>R</variation>
    <location>
        <position position="122"/>
    </location>
</feature>
<feature type="mutagenesis site" description="In Nef*4; complete loss of Nef-PTE1 interaction, Nef-induced CD4 and MHC-I down-regulation and enhancement of infectivity." evidence="2">
    <original>D</original>
    <variation>G</variation>
    <location>
        <position position="123"/>
    </location>
</feature>
<feature type="mutagenesis site" description="Complete loss of Nef-PTE1 interaction and Nef-induced CD4 down-modulation." evidence="2">
    <original>D</original>
    <variation>V</variation>
    <location>
        <position position="123"/>
    </location>
</feature>
<feature type="mutagenesis site" description="Complete loss of Nef-PTE1 interaction and Nef-induced CD4 down-modulation." evidence="2">
    <original>W</original>
    <variation>R</variation>
    <location>
        <position position="124"/>
    </location>
</feature>
<feature type="mutagenesis site" description="No effect." evidence="2">
    <original>N</original>
    <variation>S</variation>
    <location>
        <position position="126"/>
    </location>
</feature>
<feature type="mutagenesis site" description="No effect on beta-COP interaction." evidence="3">
    <original>EE</original>
    <variation>GG</variation>
    <location>
        <begin position="154"/>
        <end position="155"/>
    </location>
</feature>
<feature type="mutagenesis site" description="Complete loss of CD4 down-modulation; no effect on beta-COP interaction." evidence="3">
    <original>LL</original>
    <variation>AA</variation>
    <location>
        <begin position="164"/>
        <end position="165"/>
    </location>
</feature>
<feature type="mutagenesis site" description="In Nef*4.">
    <original>H</original>
    <variation>R</variation>
    <location>
        <position position="166"/>
    </location>
</feature>
<feature type="mutagenesis site" description="In Nef*4.">
    <original>L</original>
    <variation>Q</variation>
    <location>
        <position position="170"/>
    </location>
</feature>
<feature type="mutagenesis site" description="Complete loss of CD4 down-modulation; no effect on beta-COP interaction." evidence="3">
    <original>DD</original>
    <variation>AA</variation>
    <location>
        <begin position="174"/>
        <end position="175"/>
    </location>
</feature>
<feature type="non-terminal residue">
    <location>
        <position position="202"/>
    </location>
</feature>
<gene>
    <name evidence="1" type="primary">nef</name>
</gene>
<protein>
    <recommendedName>
        <fullName evidence="1">Protein Nef</fullName>
    </recommendedName>
    <alternativeName>
        <fullName evidence="1">3'ORF</fullName>
    </alternativeName>
    <alternativeName>
        <fullName evidence="1">Negative factor</fullName>
        <shortName evidence="1">F-protein</shortName>
    </alternativeName>
    <component>
        <recommendedName>
            <fullName evidence="1">C-terminal core protein</fullName>
        </recommendedName>
    </component>
</protein>
<dbReference type="EMBL" id="AF166101">
    <property type="protein sequence ID" value="AAD47831.1"/>
    <property type="molecule type" value="Genomic_DNA"/>
</dbReference>
<dbReference type="SMR" id="Q9QPN3"/>
<dbReference type="DIP" id="DIP-45114N"/>
<dbReference type="IntAct" id="Q9QPN3">
    <property type="interactions" value="1"/>
</dbReference>
<dbReference type="MINT" id="Q9QPN3"/>
<dbReference type="ABCD" id="Q9QPN3">
    <property type="antibodies" value="3 sequenced antibodies"/>
</dbReference>
<dbReference type="GO" id="GO:0005576">
    <property type="term" value="C:extracellular region"/>
    <property type="evidence" value="ECO:0007669"/>
    <property type="project" value="UniProtKB-SubCell"/>
</dbReference>
<dbReference type="GO" id="GO:0044178">
    <property type="term" value="C:host cell Golgi membrane"/>
    <property type="evidence" value="ECO:0007669"/>
    <property type="project" value="UniProtKB-SubCell"/>
</dbReference>
<dbReference type="GO" id="GO:0020002">
    <property type="term" value="C:host cell plasma membrane"/>
    <property type="evidence" value="ECO:0007669"/>
    <property type="project" value="UniProtKB-SubCell"/>
</dbReference>
<dbReference type="GO" id="GO:0016020">
    <property type="term" value="C:membrane"/>
    <property type="evidence" value="ECO:0007669"/>
    <property type="project" value="UniProtKB-KW"/>
</dbReference>
<dbReference type="GO" id="GO:0044423">
    <property type="term" value="C:virion component"/>
    <property type="evidence" value="ECO:0007669"/>
    <property type="project" value="UniProtKB-KW"/>
</dbReference>
<dbReference type="GO" id="GO:0005525">
    <property type="term" value="F:GTP binding"/>
    <property type="evidence" value="ECO:0007669"/>
    <property type="project" value="InterPro"/>
</dbReference>
<dbReference type="GO" id="GO:0017124">
    <property type="term" value="F:SH3 domain binding"/>
    <property type="evidence" value="ECO:0007669"/>
    <property type="project" value="UniProtKB-KW"/>
</dbReference>
<dbReference type="GO" id="GO:0046776">
    <property type="term" value="P:symbiont-mediated suppression of host antigen processing and presentation of peptide antigen via MHC class I"/>
    <property type="evidence" value="ECO:0007669"/>
    <property type="project" value="UniProtKB-KW"/>
</dbReference>
<dbReference type="GO" id="GO:0039505">
    <property type="term" value="P:symbiont-mediated suppression of host antigen processing and presentation of peptide antigen via MHC class II"/>
    <property type="evidence" value="ECO:0007669"/>
    <property type="project" value="UniProtKB-KW"/>
</dbReference>
<dbReference type="GO" id="GO:0140321">
    <property type="term" value="P:symbiont-mediated suppression of host autophagy"/>
    <property type="evidence" value="ECO:0007669"/>
    <property type="project" value="UniProtKB-KW"/>
</dbReference>
<dbReference type="FunFam" id="3.30.62.10:FF:000001">
    <property type="entry name" value="Protein Nef"/>
    <property type="match status" value="1"/>
</dbReference>
<dbReference type="FunFam" id="4.10.890.10:FF:000001">
    <property type="entry name" value="Protein Nef"/>
    <property type="match status" value="1"/>
</dbReference>
<dbReference type="Gene3D" id="4.10.890.10">
    <property type="entry name" value="HIV 1 nef anchor domain"/>
    <property type="match status" value="1"/>
</dbReference>
<dbReference type="Gene3D" id="3.30.62.10">
    <property type="entry name" value="Nef Regulatory Factor"/>
    <property type="match status" value="1"/>
</dbReference>
<dbReference type="HAMAP" id="MF_04078">
    <property type="entry name" value="NEF_HIV"/>
    <property type="match status" value="1"/>
</dbReference>
<dbReference type="InterPro" id="IPR027480">
    <property type="entry name" value="HIV-1_Nef_anchor_sf"/>
</dbReference>
<dbReference type="InterPro" id="IPR027481">
    <property type="entry name" value="HIV-1_Nef_core_sf"/>
</dbReference>
<dbReference type="InterPro" id="IPR001558">
    <property type="entry name" value="HIV_Nef"/>
</dbReference>
<dbReference type="Pfam" id="PF00469">
    <property type="entry name" value="F-protein"/>
    <property type="match status" value="1"/>
</dbReference>
<dbReference type="SUPFAM" id="SSF55671">
    <property type="entry name" value="Regulatory factor Nef"/>
    <property type="match status" value="1"/>
</dbReference>
<keyword id="KW-0014">AIDS</keyword>
<keyword id="KW-0053">Apoptosis</keyword>
<keyword id="KW-0244">Early protein</keyword>
<keyword id="KW-1032">Host cell membrane</keyword>
<keyword id="KW-1040">Host Golgi apparatus</keyword>
<keyword id="KW-1043">Host membrane</keyword>
<keyword id="KW-0945">Host-virus interaction</keyword>
<keyword id="KW-1080">Inhibition of host adaptive immune response by virus</keyword>
<keyword id="KW-1083">Inhibition of host autophagy by virus</keyword>
<keyword id="KW-1115">Inhibition of host MHC class I molecule presentation by virus</keyword>
<keyword id="KW-1116">Inhibition of host MHC class II molecule presentation by virus</keyword>
<keyword id="KW-0449">Lipoprotein</keyword>
<keyword id="KW-0472">Membrane</keyword>
<keyword id="KW-0519">Myristate</keyword>
<keyword id="KW-0597">Phosphoprotein</keyword>
<keyword id="KW-0964">Secreted</keyword>
<keyword id="KW-0729">SH3-binding</keyword>
<keyword id="KW-0899">Viral immunoevasion</keyword>
<keyword id="KW-0946">Virion</keyword>
<keyword id="KW-0843">Virulence</keyword>
<organismHost>
    <name type="scientific">Homo sapiens</name>
    <name type="common">Human</name>
    <dbReference type="NCBI Taxonomy" id="9606"/>
</organismHost>